<dbReference type="EC" id="6.3.2.8" evidence="1"/>
<dbReference type="EMBL" id="BA000022">
    <property type="protein sequence ID" value="BAA18634.1"/>
    <property type="molecule type" value="Genomic_DNA"/>
</dbReference>
<dbReference type="PIR" id="S76722">
    <property type="entry name" value="S76722"/>
</dbReference>
<dbReference type="SMR" id="P74528"/>
<dbReference type="FunCoup" id="P74528">
    <property type="interactions" value="292"/>
</dbReference>
<dbReference type="IntAct" id="P74528">
    <property type="interactions" value="13"/>
</dbReference>
<dbReference type="STRING" id="1148.gene:10500399"/>
<dbReference type="PaxDb" id="1148-1653723"/>
<dbReference type="EnsemblBacteria" id="BAA18634">
    <property type="protein sequence ID" value="BAA18634"/>
    <property type="gene ID" value="BAA18634"/>
</dbReference>
<dbReference type="KEGG" id="syn:slr1423"/>
<dbReference type="eggNOG" id="COG0773">
    <property type="taxonomic scope" value="Bacteria"/>
</dbReference>
<dbReference type="InParanoid" id="P74528"/>
<dbReference type="PhylomeDB" id="P74528"/>
<dbReference type="UniPathway" id="UPA00219"/>
<dbReference type="Proteomes" id="UP000001425">
    <property type="component" value="Chromosome"/>
</dbReference>
<dbReference type="GO" id="GO:0005737">
    <property type="term" value="C:cytoplasm"/>
    <property type="evidence" value="ECO:0007669"/>
    <property type="project" value="UniProtKB-SubCell"/>
</dbReference>
<dbReference type="GO" id="GO:0005524">
    <property type="term" value="F:ATP binding"/>
    <property type="evidence" value="ECO:0007669"/>
    <property type="project" value="UniProtKB-UniRule"/>
</dbReference>
<dbReference type="GO" id="GO:0008763">
    <property type="term" value="F:UDP-N-acetylmuramate-L-alanine ligase activity"/>
    <property type="evidence" value="ECO:0007669"/>
    <property type="project" value="UniProtKB-UniRule"/>
</dbReference>
<dbReference type="GO" id="GO:0051301">
    <property type="term" value="P:cell division"/>
    <property type="evidence" value="ECO:0007669"/>
    <property type="project" value="UniProtKB-KW"/>
</dbReference>
<dbReference type="GO" id="GO:0071555">
    <property type="term" value="P:cell wall organization"/>
    <property type="evidence" value="ECO:0007669"/>
    <property type="project" value="UniProtKB-KW"/>
</dbReference>
<dbReference type="GO" id="GO:0009252">
    <property type="term" value="P:peptidoglycan biosynthetic process"/>
    <property type="evidence" value="ECO:0007669"/>
    <property type="project" value="UniProtKB-UniRule"/>
</dbReference>
<dbReference type="GO" id="GO:0008360">
    <property type="term" value="P:regulation of cell shape"/>
    <property type="evidence" value="ECO:0007669"/>
    <property type="project" value="UniProtKB-KW"/>
</dbReference>
<dbReference type="Gene3D" id="3.90.190.20">
    <property type="entry name" value="Mur ligase, C-terminal domain"/>
    <property type="match status" value="1"/>
</dbReference>
<dbReference type="Gene3D" id="3.40.1190.10">
    <property type="entry name" value="Mur-like, catalytic domain"/>
    <property type="match status" value="1"/>
</dbReference>
<dbReference type="Gene3D" id="3.40.50.720">
    <property type="entry name" value="NAD(P)-binding Rossmann-like Domain"/>
    <property type="match status" value="1"/>
</dbReference>
<dbReference type="HAMAP" id="MF_00046">
    <property type="entry name" value="MurC"/>
    <property type="match status" value="1"/>
</dbReference>
<dbReference type="InterPro" id="IPR036565">
    <property type="entry name" value="Mur-like_cat_sf"/>
</dbReference>
<dbReference type="InterPro" id="IPR004101">
    <property type="entry name" value="Mur_ligase_C"/>
</dbReference>
<dbReference type="InterPro" id="IPR036615">
    <property type="entry name" value="Mur_ligase_C_dom_sf"/>
</dbReference>
<dbReference type="InterPro" id="IPR013221">
    <property type="entry name" value="Mur_ligase_cen"/>
</dbReference>
<dbReference type="InterPro" id="IPR000713">
    <property type="entry name" value="Mur_ligase_N"/>
</dbReference>
<dbReference type="InterPro" id="IPR050061">
    <property type="entry name" value="MurCDEF_pg_biosynth"/>
</dbReference>
<dbReference type="InterPro" id="IPR005758">
    <property type="entry name" value="UDP-N-AcMur_Ala_ligase_MurC"/>
</dbReference>
<dbReference type="NCBIfam" id="TIGR01082">
    <property type="entry name" value="murC"/>
    <property type="match status" value="1"/>
</dbReference>
<dbReference type="PANTHER" id="PTHR43445:SF3">
    <property type="entry name" value="UDP-N-ACETYLMURAMATE--L-ALANINE LIGASE"/>
    <property type="match status" value="1"/>
</dbReference>
<dbReference type="PANTHER" id="PTHR43445">
    <property type="entry name" value="UDP-N-ACETYLMURAMATE--L-ALANINE LIGASE-RELATED"/>
    <property type="match status" value="1"/>
</dbReference>
<dbReference type="Pfam" id="PF01225">
    <property type="entry name" value="Mur_ligase"/>
    <property type="match status" value="1"/>
</dbReference>
<dbReference type="Pfam" id="PF02875">
    <property type="entry name" value="Mur_ligase_C"/>
    <property type="match status" value="1"/>
</dbReference>
<dbReference type="Pfam" id="PF08245">
    <property type="entry name" value="Mur_ligase_M"/>
    <property type="match status" value="1"/>
</dbReference>
<dbReference type="SUPFAM" id="SSF51984">
    <property type="entry name" value="MurCD N-terminal domain"/>
    <property type="match status" value="1"/>
</dbReference>
<dbReference type="SUPFAM" id="SSF53623">
    <property type="entry name" value="MurD-like peptide ligases, catalytic domain"/>
    <property type="match status" value="1"/>
</dbReference>
<dbReference type="SUPFAM" id="SSF53244">
    <property type="entry name" value="MurD-like peptide ligases, peptide-binding domain"/>
    <property type="match status" value="1"/>
</dbReference>
<feature type="chain" id="PRO_0000182176" description="UDP-N-acetylmuramate--L-alanine ligase">
    <location>
        <begin position="1"/>
        <end position="505"/>
    </location>
</feature>
<feature type="binding site" evidence="1">
    <location>
        <begin position="164"/>
        <end position="170"/>
    </location>
    <ligand>
        <name>ATP</name>
        <dbReference type="ChEBI" id="CHEBI:30616"/>
    </ligand>
</feature>
<sequence length="505" mass="54514">MRSVAVGAVDFSGRPFHFLGIGGIGMSALAYVLAKRHLPVSGSDLRRTHITDRLESVGAKIFQDQVPENLDYFQSLQVNPAVALPTGSPGSGLTLEQIAESASNGVNGNGRYQTHCLPQVVCSTAINEGNLEYQGAIAKNCPIYHRSDILAALIAESRGIGVAGTHGKTTTSSLIGYVLKEAGLDPTIVVGGEVDAWQGNAYLGSGEYLVAEVDESDGSLTKHHPEIGIVTNIELDHPDHYSTLAEVVEIFRTFESHCQTLIGCLDCGVVRQHLSPTITYSLENHPEADYQARQIKRQAHGNEVEVWERGVCLGTMTVTLPGDHNISNALAAVAVGRLLGLDFPVIAQAIASFNGAKRRFECKGYCNGITFIDDYAHHPSELLATLAAAKQKVTHGKYERVVAIFQPHRYSRTHTFMAEFATAFKDADLVVLTDIYSAGEQNPYNIRGEDLAKAVGQHHGHVVYQPRLTELREFLPKVLQSGDLALFLGAGNLNQQIAPVLAACA</sequence>
<protein>
    <recommendedName>
        <fullName evidence="1">UDP-N-acetylmuramate--L-alanine ligase</fullName>
        <ecNumber evidence="1">6.3.2.8</ecNumber>
    </recommendedName>
    <alternativeName>
        <fullName evidence="1">UDP-N-acetylmuramoyl-L-alanine synthetase</fullName>
    </alternativeName>
</protein>
<name>MURC_SYNY3</name>
<reference key="1">
    <citation type="journal article" date="1996" name="DNA Res.">
        <title>Sequence analysis of the genome of the unicellular cyanobacterium Synechocystis sp. strain PCC6803. II. Sequence determination of the entire genome and assignment of potential protein-coding regions.</title>
        <authorList>
            <person name="Kaneko T."/>
            <person name="Sato S."/>
            <person name="Kotani H."/>
            <person name="Tanaka A."/>
            <person name="Asamizu E."/>
            <person name="Nakamura Y."/>
            <person name="Miyajima N."/>
            <person name="Hirosawa M."/>
            <person name="Sugiura M."/>
            <person name="Sasamoto S."/>
            <person name="Kimura T."/>
            <person name="Hosouchi T."/>
            <person name="Matsuno A."/>
            <person name="Muraki A."/>
            <person name="Nakazaki N."/>
            <person name="Naruo K."/>
            <person name="Okumura S."/>
            <person name="Shimpo S."/>
            <person name="Takeuchi C."/>
            <person name="Wada T."/>
            <person name="Watanabe A."/>
            <person name="Yamada M."/>
            <person name="Yasuda M."/>
            <person name="Tabata S."/>
        </authorList>
    </citation>
    <scope>NUCLEOTIDE SEQUENCE [LARGE SCALE GENOMIC DNA]</scope>
    <source>
        <strain>ATCC 27184 / PCC 6803 / Kazusa</strain>
    </source>
</reference>
<proteinExistence type="inferred from homology"/>
<accession>P74528</accession>
<gene>
    <name evidence="1" type="primary">murC</name>
    <name type="ordered locus">slr1423</name>
</gene>
<evidence type="ECO:0000255" key="1">
    <source>
        <dbReference type="HAMAP-Rule" id="MF_00046"/>
    </source>
</evidence>
<comment type="function">
    <text evidence="1">Cell wall formation.</text>
</comment>
<comment type="catalytic activity">
    <reaction evidence="1">
        <text>UDP-N-acetyl-alpha-D-muramate + L-alanine + ATP = UDP-N-acetyl-alpha-D-muramoyl-L-alanine + ADP + phosphate + H(+)</text>
        <dbReference type="Rhea" id="RHEA:23372"/>
        <dbReference type="ChEBI" id="CHEBI:15378"/>
        <dbReference type="ChEBI" id="CHEBI:30616"/>
        <dbReference type="ChEBI" id="CHEBI:43474"/>
        <dbReference type="ChEBI" id="CHEBI:57972"/>
        <dbReference type="ChEBI" id="CHEBI:70757"/>
        <dbReference type="ChEBI" id="CHEBI:83898"/>
        <dbReference type="ChEBI" id="CHEBI:456216"/>
        <dbReference type="EC" id="6.3.2.8"/>
    </reaction>
</comment>
<comment type="pathway">
    <text evidence="1">Cell wall biogenesis; peptidoglycan biosynthesis.</text>
</comment>
<comment type="subcellular location">
    <subcellularLocation>
        <location evidence="1">Cytoplasm</location>
    </subcellularLocation>
</comment>
<comment type="similarity">
    <text evidence="1">Belongs to the MurCDEF family.</text>
</comment>
<keyword id="KW-0067">ATP-binding</keyword>
<keyword id="KW-0131">Cell cycle</keyword>
<keyword id="KW-0132">Cell division</keyword>
<keyword id="KW-0133">Cell shape</keyword>
<keyword id="KW-0961">Cell wall biogenesis/degradation</keyword>
<keyword id="KW-0963">Cytoplasm</keyword>
<keyword id="KW-0436">Ligase</keyword>
<keyword id="KW-0547">Nucleotide-binding</keyword>
<keyword id="KW-0573">Peptidoglycan synthesis</keyword>
<keyword id="KW-1185">Reference proteome</keyword>
<organism>
    <name type="scientific">Synechocystis sp. (strain ATCC 27184 / PCC 6803 / Kazusa)</name>
    <dbReference type="NCBI Taxonomy" id="1111708"/>
    <lineage>
        <taxon>Bacteria</taxon>
        <taxon>Bacillati</taxon>
        <taxon>Cyanobacteriota</taxon>
        <taxon>Cyanophyceae</taxon>
        <taxon>Synechococcales</taxon>
        <taxon>Merismopediaceae</taxon>
        <taxon>Synechocystis</taxon>
    </lineage>
</organism>